<protein>
    <recommendedName>
        <fullName evidence="1">Glycerol-3-phosphate acyltransferase</fullName>
    </recommendedName>
    <alternativeName>
        <fullName evidence="1">Acyl-PO4 G3P acyltransferase</fullName>
    </alternativeName>
    <alternativeName>
        <fullName evidence="1">Acyl-phosphate--glycerol-3-phosphate acyltransferase</fullName>
    </alternativeName>
    <alternativeName>
        <fullName evidence="1">G3P acyltransferase</fullName>
        <shortName evidence="1">GPAT</shortName>
        <ecNumber evidence="1">2.3.1.275</ecNumber>
    </alternativeName>
    <alternativeName>
        <fullName evidence="1">Lysophosphatidic acid synthase</fullName>
        <shortName evidence="1">LPA synthase</shortName>
    </alternativeName>
</protein>
<evidence type="ECO:0000255" key="1">
    <source>
        <dbReference type="HAMAP-Rule" id="MF_01043"/>
    </source>
</evidence>
<comment type="function">
    <text evidence="1">Catalyzes the transfer of an acyl group from acyl-phosphate (acyl-PO(4)) to glycerol-3-phosphate (G3P) to form lysophosphatidic acid (LPA). This enzyme utilizes acyl-phosphate as fatty acyl donor, but not acyl-CoA or acyl-ACP.</text>
</comment>
<comment type="catalytic activity">
    <reaction evidence="1">
        <text>an acyl phosphate + sn-glycerol 3-phosphate = a 1-acyl-sn-glycero-3-phosphate + phosphate</text>
        <dbReference type="Rhea" id="RHEA:34075"/>
        <dbReference type="ChEBI" id="CHEBI:43474"/>
        <dbReference type="ChEBI" id="CHEBI:57597"/>
        <dbReference type="ChEBI" id="CHEBI:57970"/>
        <dbReference type="ChEBI" id="CHEBI:59918"/>
        <dbReference type="EC" id="2.3.1.275"/>
    </reaction>
</comment>
<comment type="pathway">
    <text evidence="1">Lipid metabolism; phospholipid metabolism.</text>
</comment>
<comment type="subunit">
    <text evidence="1">Probably interacts with PlsX.</text>
</comment>
<comment type="subcellular location">
    <subcellularLocation>
        <location evidence="1">Cell inner membrane</location>
        <topology evidence="1">Multi-pass membrane protein</topology>
    </subcellularLocation>
</comment>
<comment type="similarity">
    <text evidence="1">Belongs to the PlsY family.</text>
</comment>
<accession>C0RLC2</accession>
<organism>
    <name type="scientific">Brucella melitensis biotype 2 (strain ATCC 23457)</name>
    <dbReference type="NCBI Taxonomy" id="546272"/>
    <lineage>
        <taxon>Bacteria</taxon>
        <taxon>Pseudomonadati</taxon>
        <taxon>Pseudomonadota</taxon>
        <taxon>Alphaproteobacteria</taxon>
        <taxon>Hyphomicrobiales</taxon>
        <taxon>Brucellaceae</taxon>
        <taxon>Brucella/Ochrobactrum group</taxon>
        <taxon>Brucella</taxon>
    </lineage>
</organism>
<proteinExistence type="inferred from homology"/>
<dbReference type="EC" id="2.3.1.275" evidence="1"/>
<dbReference type="EMBL" id="CP001489">
    <property type="protein sequence ID" value="ACO02405.1"/>
    <property type="molecule type" value="Genomic_DNA"/>
</dbReference>
<dbReference type="RefSeq" id="WP_004681904.1">
    <property type="nucleotide sequence ID" value="NC_012442.1"/>
</dbReference>
<dbReference type="SMR" id="C0RLC2"/>
<dbReference type="GeneID" id="29595027"/>
<dbReference type="KEGG" id="bmi:BMEA_B0576"/>
<dbReference type="HOGENOM" id="CLU_081254_1_0_5"/>
<dbReference type="UniPathway" id="UPA00085"/>
<dbReference type="Proteomes" id="UP000001748">
    <property type="component" value="Chromosome II"/>
</dbReference>
<dbReference type="GO" id="GO:0005886">
    <property type="term" value="C:plasma membrane"/>
    <property type="evidence" value="ECO:0007669"/>
    <property type="project" value="UniProtKB-SubCell"/>
</dbReference>
<dbReference type="GO" id="GO:0043772">
    <property type="term" value="F:acyl-phosphate glycerol-3-phosphate acyltransferase activity"/>
    <property type="evidence" value="ECO:0007669"/>
    <property type="project" value="UniProtKB-UniRule"/>
</dbReference>
<dbReference type="GO" id="GO:0008654">
    <property type="term" value="P:phospholipid biosynthetic process"/>
    <property type="evidence" value="ECO:0007669"/>
    <property type="project" value="UniProtKB-UniRule"/>
</dbReference>
<dbReference type="HAMAP" id="MF_01043">
    <property type="entry name" value="PlsY"/>
    <property type="match status" value="1"/>
</dbReference>
<dbReference type="InterPro" id="IPR003811">
    <property type="entry name" value="G3P_acylTferase_PlsY"/>
</dbReference>
<dbReference type="NCBIfam" id="TIGR00023">
    <property type="entry name" value="glycerol-3-phosphate 1-O-acyltransferase PlsY"/>
    <property type="match status" value="1"/>
</dbReference>
<dbReference type="PANTHER" id="PTHR30309:SF0">
    <property type="entry name" value="GLYCEROL-3-PHOSPHATE ACYLTRANSFERASE-RELATED"/>
    <property type="match status" value="1"/>
</dbReference>
<dbReference type="PANTHER" id="PTHR30309">
    <property type="entry name" value="INNER MEMBRANE PROTEIN YGIH"/>
    <property type="match status" value="1"/>
</dbReference>
<dbReference type="Pfam" id="PF02660">
    <property type="entry name" value="G3P_acyltransf"/>
    <property type="match status" value="1"/>
</dbReference>
<dbReference type="SMART" id="SM01207">
    <property type="entry name" value="G3P_acyltransf"/>
    <property type="match status" value="1"/>
</dbReference>
<gene>
    <name evidence="1" type="primary">plsY</name>
    <name type="ordered locus">BMEA_B0576</name>
</gene>
<keyword id="KW-0997">Cell inner membrane</keyword>
<keyword id="KW-1003">Cell membrane</keyword>
<keyword id="KW-0444">Lipid biosynthesis</keyword>
<keyword id="KW-0443">Lipid metabolism</keyword>
<keyword id="KW-0472">Membrane</keyword>
<keyword id="KW-0594">Phospholipid biosynthesis</keyword>
<keyword id="KW-1208">Phospholipid metabolism</keyword>
<keyword id="KW-0808">Transferase</keyword>
<keyword id="KW-0812">Transmembrane</keyword>
<keyword id="KW-1133">Transmembrane helix</keyword>
<reference key="1">
    <citation type="submission" date="2009-03" db="EMBL/GenBank/DDBJ databases">
        <title>Brucella melitensis ATCC 23457 whole genome shotgun sequencing project.</title>
        <authorList>
            <person name="Setubal J.C."/>
            <person name="Boyle S."/>
            <person name="Crasta O.R."/>
            <person name="Gillespie J.J."/>
            <person name="Kenyon R.W."/>
            <person name="Lu J."/>
            <person name="Mane S."/>
            <person name="Nagrani S."/>
            <person name="Shallom J.M."/>
            <person name="Shallom S."/>
            <person name="Shukla M."/>
            <person name="Snyder E.E."/>
            <person name="Sobral B.W."/>
            <person name="Wattam A.R."/>
            <person name="Will R."/>
            <person name="Williams K."/>
            <person name="Yoo H."/>
            <person name="Munk C."/>
            <person name="Tapia R."/>
            <person name="Han C."/>
            <person name="Detter J.C."/>
            <person name="Bruce D."/>
            <person name="Brettin T.S."/>
        </authorList>
    </citation>
    <scope>NUCLEOTIDE SEQUENCE [LARGE SCALE GENOMIC DNA]</scope>
    <source>
        <strain>ATCC 23457</strain>
    </source>
</reference>
<sequence length="201" mass="20507">MAEPGFFNAMLIGALIFGYVLGSIPFGLILTRLAGLGDVRAIGSGNIGATNVLRTGNKKLAAATLILDALKGTAAALIAAHFGQNAAIAAGFGAFIGHLFPVWIGFKGGKGVATYLGVLIGLAWAGALVFAAAWIVTALLARYSSLSALVASLVVPIALYSRGNQALAALFAIMTVIVFIKHRANISRLLNGTESKIGAKG</sequence>
<feature type="chain" id="PRO_1000149563" description="Glycerol-3-phosphate acyltransferase">
    <location>
        <begin position="1"/>
        <end position="201"/>
    </location>
</feature>
<feature type="transmembrane region" description="Helical" evidence="1">
    <location>
        <begin position="10"/>
        <end position="30"/>
    </location>
</feature>
<feature type="transmembrane region" description="Helical" evidence="1">
    <location>
        <begin position="60"/>
        <end position="80"/>
    </location>
</feature>
<feature type="transmembrane region" description="Helical" evidence="1">
    <location>
        <begin position="86"/>
        <end position="106"/>
    </location>
</feature>
<feature type="transmembrane region" description="Helical" evidence="1">
    <location>
        <begin position="116"/>
        <end position="136"/>
    </location>
</feature>
<feature type="transmembrane region" description="Helical" evidence="1">
    <location>
        <begin position="166"/>
        <end position="186"/>
    </location>
</feature>
<name>PLSY_BRUMB</name>